<protein>
    <recommendedName>
        <fullName evidence="1">Phosphoserine aminotransferase</fullName>
        <ecNumber evidence="1">2.6.1.52</ecNumber>
    </recommendedName>
    <alternativeName>
        <fullName evidence="1">Phosphohydroxythreonine aminotransferase</fullName>
        <shortName evidence="1">PSAT</shortName>
    </alternativeName>
</protein>
<reference key="1">
    <citation type="submission" date="2006-08" db="EMBL/GenBank/DDBJ databases">
        <title>Complete sequence of Shewanella sp. MR-4.</title>
        <authorList>
            <consortium name="US DOE Joint Genome Institute"/>
            <person name="Copeland A."/>
            <person name="Lucas S."/>
            <person name="Lapidus A."/>
            <person name="Barry K."/>
            <person name="Detter J.C."/>
            <person name="Glavina del Rio T."/>
            <person name="Hammon N."/>
            <person name="Israni S."/>
            <person name="Dalin E."/>
            <person name="Tice H."/>
            <person name="Pitluck S."/>
            <person name="Kiss H."/>
            <person name="Brettin T."/>
            <person name="Bruce D."/>
            <person name="Han C."/>
            <person name="Tapia R."/>
            <person name="Gilna P."/>
            <person name="Schmutz J."/>
            <person name="Larimer F."/>
            <person name="Land M."/>
            <person name="Hauser L."/>
            <person name="Kyrpides N."/>
            <person name="Mikhailova N."/>
            <person name="Nealson K."/>
            <person name="Konstantinidis K."/>
            <person name="Klappenbach J."/>
            <person name="Tiedje J."/>
            <person name="Richardson P."/>
        </authorList>
    </citation>
    <scope>NUCLEOTIDE SEQUENCE [LARGE SCALE GENOMIC DNA]</scope>
    <source>
        <strain>MR-4</strain>
    </source>
</reference>
<accession>Q0HIX3</accession>
<gene>
    <name evidence="1" type="primary">serC</name>
    <name type="ordered locus">Shewmr4_1920</name>
</gene>
<feature type="chain" id="PRO_1000203574" description="Phosphoserine aminotransferase">
    <location>
        <begin position="1"/>
        <end position="363"/>
    </location>
</feature>
<feature type="binding site" evidence="1">
    <location>
        <position position="42"/>
    </location>
    <ligand>
        <name>L-glutamate</name>
        <dbReference type="ChEBI" id="CHEBI:29985"/>
    </ligand>
</feature>
<feature type="binding site" evidence="1">
    <location>
        <begin position="76"/>
        <end position="77"/>
    </location>
    <ligand>
        <name>pyridoxal 5'-phosphate</name>
        <dbReference type="ChEBI" id="CHEBI:597326"/>
    </ligand>
</feature>
<feature type="binding site" evidence="1">
    <location>
        <position position="102"/>
    </location>
    <ligand>
        <name>pyridoxal 5'-phosphate</name>
        <dbReference type="ChEBI" id="CHEBI:597326"/>
    </ligand>
</feature>
<feature type="binding site" evidence="1">
    <location>
        <position position="156"/>
    </location>
    <ligand>
        <name>pyridoxal 5'-phosphate</name>
        <dbReference type="ChEBI" id="CHEBI:597326"/>
    </ligand>
</feature>
<feature type="binding site" evidence="1">
    <location>
        <position position="175"/>
    </location>
    <ligand>
        <name>pyridoxal 5'-phosphate</name>
        <dbReference type="ChEBI" id="CHEBI:597326"/>
    </ligand>
</feature>
<feature type="binding site" evidence="1">
    <location>
        <position position="198"/>
    </location>
    <ligand>
        <name>pyridoxal 5'-phosphate</name>
        <dbReference type="ChEBI" id="CHEBI:597326"/>
    </ligand>
</feature>
<feature type="binding site" evidence="1">
    <location>
        <begin position="240"/>
        <end position="241"/>
    </location>
    <ligand>
        <name>pyridoxal 5'-phosphate</name>
        <dbReference type="ChEBI" id="CHEBI:597326"/>
    </ligand>
</feature>
<feature type="modified residue" description="N6-(pyridoxal phosphate)lysine" evidence="1">
    <location>
        <position position="199"/>
    </location>
</feature>
<organism>
    <name type="scientific">Shewanella sp. (strain MR-4)</name>
    <dbReference type="NCBI Taxonomy" id="60480"/>
    <lineage>
        <taxon>Bacteria</taxon>
        <taxon>Pseudomonadati</taxon>
        <taxon>Pseudomonadota</taxon>
        <taxon>Gammaproteobacteria</taxon>
        <taxon>Alteromonadales</taxon>
        <taxon>Shewanellaceae</taxon>
        <taxon>Shewanella</taxon>
    </lineage>
</organism>
<proteinExistence type="inferred from homology"/>
<evidence type="ECO:0000255" key="1">
    <source>
        <dbReference type="HAMAP-Rule" id="MF_00160"/>
    </source>
</evidence>
<keyword id="KW-0028">Amino-acid biosynthesis</keyword>
<keyword id="KW-0032">Aminotransferase</keyword>
<keyword id="KW-0963">Cytoplasm</keyword>
<keyword id="KW-0663">Pyridoxal phosphate</keyword>
<keyword id="KW-0664">Pyridoxine biosynthesis</keyword>
<keyword id="KW-0718">Serine biosynthesis</keyword>
<keyword id="KW-0808">Transferase</keyword>
<name>SERC_SHESM</name>
<comment type="function">
    <text evidence="1">Catalyzes the reversible conversion of 3-phosphohydroxypyruvate to phosphoserine and of 3-hydroxy-2-oxo-4-phosphonooxybutanoate to phosphohydroxythreonine.</text>
</comment>
<comment type="catalytic activity">
    <reaction evidence="1">
        <text>O-phospho-L-serine + 2-oxoglutarate = 3-phosphooxypyruvate + L-glutamate</text>
        <dbReference type="Rhea" id="RHEA:14329"/>
        <dbReference type="ChEBI" id="CHEBI:16810"/>
        <dbReference type="ChEBI" id="CHEBI:18110"/>
        <dbReference type="ChEBI" id="CHEBI:29985"/>
        <dbReference type="ChEBI" id="CHEBI:57524"/>
        <dbReference type="EC" id="2.6.1.52"/>
    </reaction>
</comment>
<comment type="catalytic activity">
    <reaction evidence="1">
        <text>4-(phosphooxy)-L-threonine + 2-oxoglutarate = (R)-3-hydroxy-2-oxo-4-phosphooxybutanoate + L-glutamate</text>
        <dbReference type="Rhea" id="RHEA:16573"/>
        <dbReference type="ChEBI" id="CHEBI:16810"/>
        <dbReference type="ChEBI" id="CHEBI:29985"/>
        <dbReference type="ChEBI" id="CHEBI:58452"/>
        <dbReference type="ChEBI" id="CHEBI:58538"/>
        <dbReference type="EC" id="2.6.1.52"/>
    </reaction>
</comment>
<comment type="cofactor">
    <cofactor evidence="1">
        <name>pyridoxal 5'-phosphate</name>
        <dbReference type="ChEBI" id="CHEBI:597326"/>
    </cofactor>
    <text evidence="1">Binds 1 pyridoxal phosphate per subunit.</text>
</comment>
<comment type="pathway">
    <text evidence="1">Amino-acid biosynthesis; L-serine biosynthesis; L-serine from 3-phospho-D-glycerate: step 2/3.</text>
</comment>
<comment type="pathway">
    <text evidence="1">Cofactor biosynthesis; pyridoxine 5'-phosphate biosynthesis; pyridoxine 5'-phosphate from D-erythrose 4-phosphate: step 3/5.</text>
</comment>
<comment type="subunit">
    <text evidence="1">Homodimer.</text>
</comment>
<comment type="subcellular location">
    <subcellularLocation>
        <location evidence="1">Cytoplasm</location>
    </subcellularLocation>
</comment>
<comment type="similarity">
    <text evidence="1">Belongs to the class-V pyridoxal-phosphate-dependent aminotransferase family. SerC subfamily.</text>
</comment>
<dbReference type="EC" id="2.6.1.52" evidence="1"/>
<dbReference type="EMBL" id="CP000446">
    <property type="protein sequence ID" value="ABI38994.1"/>
    <property type="molecule type" value="Genomic_DNA"/>
</dbReference>
<dbReference type="RefSeq" id="WP_011622691.1">
    <property type="nucleotide sequence ID" value="NC_008321.1"/>
</dbReference>
<dbReference type="SMR" id="Q0HIX3"/>
<dbReference type="KEGG" id="she:Shewmr4_1920"/>
<dbReference type="HOGENOM" id="CLU_034866_0_2_6"/>
<dbReference type="UniPathway" id="UPA00135">
    <property type="reaction ID" value="UER00197"/>
</dbReference>
<dbReference type="UniPathway" id="UPA00244">
    <property type="reaction ID" value="UER00311"/>
</dbReference>
<dbReference type="GO" id="GO:0005737">
    <property type="term" value="C:cytoplasm"/>
    <property type="evidence" value="ECO:0007669"/>
    <property type="project" value="UniProtKB-SubCell"/>
</dbReference>
<dbReference type="GO" id="GO:0004648">
    <property type="term" value="F:O-phospho-L-serine:2-oxoglutarate aminotransferase activity"/>
    <property type="evidence" value="ECO:0007669"/>
    <property type="project" value="UniProtKB-UniRule"/>
</dbReference>
<dbReference type="GO" id="GO:0030170">
    <property type="term" value="F:pyridoxal phosphate binding"/>
    <property type="evidence" value="ECO:0007669"/>
    <property type="project" value="UniProtKB-UniRule"/>
</dbReference>
<dbReference type="GO" id="GO:0006564">
    <property type="term" value="P:L-serine biosynthetic process"/>
    <property type="evidence" value="ECO:0007669"/>
    <property type="project" value="UniProtKB-UniRule"/>
</dbReference>
<dbReference type="GO" id="GO:0008615">
    <property type="term" value="P:pyridoxine biosynthetic process"/>
    <property type="evidence" value="ECO:0007669"/>
    <property type="project" value="UniProtKB-UniRule"/>
</dbReference>
<dbReference type="FunFam" id="3.40.640.10:FF:000010">
    <property type="entry name" value="Phosphoserine aminotransferase"/>
    <property type="match status" value="1"/>
</dbReference>
<dbReference type="FunFam" id="3.90.1150.10:FF:000006">
    <property type="entry name" value="Phosphoserine aminotransferase"/>
    <property type="match status" value="1"/>
</dbReference>
<dbReference type="Gene3D" id="3.90.1150.10">
    <property type="entry name" value="Aspartate Aminotransferase, domain 1"/>
    <property type="match status" value="1"/>
</dbReference>
<dbReference type="Gene3D" id="3.40.640.10">
    <property type="entry name" value="Type I PLP-dependent aspartate aminotransferase-like (Major domain)"/>
    <property type="match status" value="1"/>
</dbReference>
<dbReference type="HAMAP" id="MF_00160">
    <property type="entry name" value="SerC_aminotrans_5"/>
    <property type="match status" value="1"/>
</dbReference>
<dbReference type="InterPro" id="IPR000192">
    <property type="entry name" value="Aminotrans_V_dom"/>
</dbReference>
<dbReference type="InterPro" id="IPR020578">
    <property type="entry name" value="Aminotrans_V_PyrdxlP_BS"/>
</dbReference>
<dbReference type="InterPro" id="IPR022278">
    <property type="entry name" value="Pser_aminoTfrase"/>
</dbReference>
<dbReference type="InterPro" id="IPR015424">
    <property type="entry name" value="PyrdxlP-dep_Trfase"/>
</dbReference>
<dbReference type="InterPro" id="IPR015421">
    <property type="entry name" value="PyrdxlP-dep_Trfase_major"/>
</dbReference>
<dbReference type="InterPro" id="IPR015422">
    <property type="entry name" value="PyrdxlP-dep_Trfase_small"/>
</dbReference>
<dbReference type="NCBIfam" id="NF003764">
    <property type="entry name" value="PRK05355.1"/>
    <property type="match status" value="1"/>
</dbReference>
<dbReference type="NCBIfam" id="TIGR01364">
    <property type="entry name" value="serC_1"/>
    <property type="match status" value="1"/>
</dbReference>
<dbReference type="PANTHER" id="PTHR43247">
    <property type="entry name" value="PHOSPHOSERINE AMINOTRANSFERASE"/>
    <property type="match status" value="1"/>
</dbReference>
<dbReference type="PANTHER" id="PTHR43247:SF1">
    <property type="entry name" value="PHOSPHOSERINE AMINOTRANSFERASE"/>
    <property type="match status" value="1"/>
</dbReference>
<dbReference type="Pfam" id="PF00266">
    <property type="entry name" value="Aminotran_5"/>
    <property type="match status" value="1"/>
</dbReference>
<dbReference type="PIRSF" id="PIRSF000525">
    <property type="entry name" value="SerC"/>
    <property type="match status" value="1"/>
</dbReference>
<dbReference type="SUPFAM" id="SSF53383">
    <property type="entry name" value="PLP-dependent transferases"/>
    <property type="match status" value="1"/>
</dbReference>
<dbReference type="PROSITE" id="PS00595">
    <property type="entry name" value="AA_TRANSFER_CLASS_5"/>
    <property type="match status" value="1"/>
</dbReference>
<sequence length="363" mass="39634">MSAIYNFCAGPAMLPAAVMKKAQQELLDWNGLGVSVMEVSHRGKEFIALTKQAEADLRELMHIPQNYHVLFMHGGGRGQFSAVVNNFLGNQGRALYLVSGQWSSAALAEAQKLAGDTQIDSLNIVEKHNGLNAVVLPDLHKIDADYRYVHYCPNETVDGIEIFDELDSPWPIVADLSSTIMSREIDVSRYGLIYAGAQKNIGPSGLSIVIVRDDMLKLPSLTQSSIMDYRLAVEHDSMFNTPPTFAWYLAAEVFAWLKSLGGVASIAKINQQKAQMLYACIDANPFYKNGVVAANRSQMNVTFQLADESLDGAFLKEAEAAGLVALKGHRIVGGMRASLYNAMPLEGVAALVSFMNEFAAKHS</sequence>